<comment type="function">
    <text evidence="1">Binds DNA with high affinity but does not bind to TATA boxes. Synergises with GMNN and TBP in activation of TATA box-containing promoters and with GMNN and TBPL1 in activation of the NF1 TATA-less promoter. May play a role in cytoplasm movement and removal during spermiogenesis (By similarity).</text>
</comment>
<comment type="subunit">
    <text>Homodimer. Interacts with CBX3, CBX5, GMNN, GTF2B, TBPL1 and the polycomb proteins PHCF2, RNF2 and SCMH1 but not with CBX1 or PCGF2.</text>
</comment>
<comment type="subcellular location">
    <subcellularLocation>
        <location evidence="1">Cytoplasm</location>
    </subcellularLocation>
    <subcellularLocation>
        <location evidence="1">Nucleus</location>
        <location evidence="1">Nucleolus</location>
    </subcellularLocation>
    <subcellularLocation>
        <location evidence="1">Nucleus</location>
        <location evidence="1">Nucleoplasm</location>
    </subcellularLocation>
    <text evidence="1">Associated with chromatin.</text>
</comment>
<comment type="similarity">
    <text evidence="4">Belongs to the SPATA24 family.</text>
</comment>
<reference key="1">
    <citation type="submission" date="2005-06" db="EMBL/GenBank/DDBJ databases">
        <title>DNA sequences of macaque genes expressed in brain or testis and its evolutionary implications.</title>
        <authorList>
            <consortium name="International consortium for macaque cDNA sequencing and analysis"/>
        </authorList>
    </citation>
    <scope>NUCLEOTIDE SEQUENCE [LARGE SCALE MRNA]</scope>
    <source>
        <tissue>Testis</tissue>
    </source>
</reference>
<dbReference type="EMBL" id="AB168834">
    <property type="protein sequence ID" value="BAE00938.1"/>
    <property type="molecule type" value="mRNA"/>
</dbReference>
<dbReference type="RefSeq" id="NP_001306527.1">
    <property type="nucleotide sequence ID" value="NM_001319598.1"/>
</dbReference>
<dbReference type="RefSeq" id="XP_045250878.1">
    <property type="nucleotide sequence ID" value="XM_045394943.2"/>
</dbReference>
<dbReference type="SMR" id="Q4R7I4"/>
<dbReference type="STRING" id="9541.ENSMFAP00000021828"/>
<dbReference type="GeneID" id="101867491"/>
<dbReference type="eggNOG" id="ENOG502S3HF">
    <property type="taxonomic scope" value="Eukaryota"/>
</dbReference>
<dbReference type="Proteomes" id="UP000233100">
    <property type="component" value="Unplaced"/>
</dbReference>
<dbReference type="GO" id="GO:0005737">
    <property type="term" value="C:cytoplasm"/>
    <property type="evidence" value="ECO:0007669"/>
    <property type="project" value="UniProtKB-SubCell"/>
</dbReference>
<dbReference type="GO" id="GO:0005730">
    <property type="term" value="C:nucleolus"/>
    <property type="evidence" value="ECO:0007669"/>
    <property type="project" value="UniProtKB-SubCell"/>
</dbReference>
<dbReference type="GO" id="GO:0005654">
    <property type="term" value="C:nucleoplasm"/>
    <property type="evidence" value="ECO:0007669"/>
    <property type="project" value="UniProtKB-SubCell"/>
</dbReference>
<dbReference type="GO" id="GO:0003677">
    <property type="term" value="F:DNA binding"/>
    <property type="evidence" value="ECO:0007669"/>
    <property type="project" value="UniProtKB-KW"/>
</dbReference>
<dbReference type="GO" id="GO:0030154">
    <property type="term" value="P:cell differentiation"/>
    <property type="evidence" value="ECO:0007669"/>
    <property type="project" value="UniProtKB-KW"/>
</dbReference>
<dbReference type="GO" id="GO:0007283">
    <property type="term" value="P:spermatogenesis"/>
    <property type="evidence" value="ECO:0007669"/>
    <property type="project" value="UniProtKB-KW"/>
</dbReference>
<dbReference type="InterPro" id="IPR029176">
    <property type="entry name" value="SPATA24"/>
</dbReference>
<dbReference type="PANTHER" id="PTHR35155">
    <property type="entry name" value="SPERMATOGENESIS-ASSOCIATED PROTEIN 24"/>
    <property type="match status" value="1"/>
</dbReference>
<dbReference type="PANTHER" id="PTHR35155:SF1">
    <property type="entry name" value="SPERMATOGENESIS-ASSOCIATED PROTEIN 24"/>
    <property type="match status" value="1"/>
</dbReference>
<dbReference type="Pfam" id="PF15175">
    <property type="entry name" value="SPATA24"/>
    <property type="match status" value="1"/>
</dbReference>
<accession>Q4R7I4</accession>
<feature type="chain" id="PRO_0000328980" description="Spermatogenesis-associated protein 24">
    <location>
        <begin position="1"/>
        <end position="205"/>
    </location>
</feature>
<feature type="region of interest" description="Required for interaction with CBX5 and TBPL1" evidence="1">
    <location>
        <begin position="138"/>
        <end position="185"/>
    </location>
</feature>
<feature type="region of interest" description="Disordered" evidence="3">
    <location>
        <begin position="180"/>
        <end position="205"/>
    </location>
</feature>
<feature type="coiled-coil region" evidence="2">
    <location>
        <begin position="17"/>
        <end position="166"/>
    </location>
</feature>
<feature type="compositionally biased region" description="Basic residues" evidence="3">
    <location>
        <begin position="186"/>
        <end position="205"/>
    </location>
</feature>
<gene>
    <name type="primary">SPATA24</name>
    <name type="ORF">QtsA-15191</name>
</gene>
<keyword id="KW-0175">Coiled coil</keyword>
<keyword id="KW-0963">Cytoplasm</keyword>
<keyword id="KW-0217">Developmental protein</keyword>
<keyword id="KW-0221">Differentiation</keyword>
<keyword id="KW-0238">DNA-binding</keyword>
<keyword id="KW-0539">Nucleus</keyword>
<keyword id="KW-1185">Reference proteome</keyword>
<keyword id="KW-0744">Spermatogenesis</keyword>
<keyword id="KW-0804">Transcription</keyword>
<keyword id="KW-0805">Transcription regulation</keyword>
<proteinExistence type="evidence at transcript level"/>
<evidence type="ECO:0000250" key="1"/>
<evidence type="ECO:0000255" key="2"/>
<evidence type="ECO:0000256" key="3">
    <source>
        <dbReference type="SAM" id="MobiDB-lite"/>
    </source>
</evidence>
<evidence type="ECO:0000305" key="4"/>
<name>SPA24_MACFA</name>
<organism>
    <name type="scientific">Macaca fascicularis</name>
    <name type="common">Crab-eating macaque</name>
    <name type="synonym">Cynomolgus monkey</name>
    <dbReference type="NCBI Taxonomy" id="9541"/>
    <lineage>
        <taxon>Eukaryota</taxon>
        <taxon>Metazoa</taxon>
        <taxon>Chordata</taxon>
        <taxon>Craniata</taxon>
        <taxon>Vertebrata</taxon>
        <taxon>Euteleostomi</taxon>
        <taxon>Mammalia</taxon>
        <taxon>Eutheria</taxon>
        <taxon>Euarchontoglires</taxon>
        <taxon>Primates</taxon>
        <taxon>Haplorrhini</taxon>
        <taxon>Catarrhini</taxon>
        <taxon>Cercopithecidae</taxon>
        <taxon>Cercopithecinae</taxon>
        <taxon>Macaca</taxon>
    </lineage>
</organism>
<sequence length="205" mass="23602">MATPLGWSKAGSGSVCLAFDQLRDVIESQEELIHQLRNVMVLQDENFVSKEEFQAVEKKLVEEKAAHAKTKVLLAKEEEKLQFALGEVEVLSKQLEKEKLAFEKALSSVKSKVLQESSKKDQLITKCNEIESHIIKQEDILNGKENEIKELQQVISQQKQIFRNHMSDFRIQKQQESYMAQVLDQKHKKASGTRQAHSHQHPREK</sequence>
<protein>
    <recommendedName>
        <fullName>Spermatogenesis-associated protein 24</fullName>
    </recommendedName>
    <alternativeName>
        <fullName>Testis protein T6441 homolog</fullName>
    </alternativeName>
</protein>